<comment type="function">
    <text evidence="1">Methyltransferase required for the conversion of demethylmenaquinol (DMKH2) to menaquinol (MKH2).</text>
</comment>
<comment type="catalytic activity">
    <reaction evidence="1">
        <text>a 2-demethylmenaquinol + S-adenosyl-L-methionine = a menaquinol + S-adenosyl-L-homocysteine + H(+)</text>
        <dbReference type="Rhea" id="RHEA:42640"/>
        <dbReference type="Rhea" id="RHEA-COMP:9539"/>
        <dbReference type="Rhea" id="RHEA-COMP:9563"/>
        <dbReference type="ChEBI" id="CHEBI:15378"/>
        <dbReference type="ChEBI" id="CHEBI:18151"/>
        <dbReference type="ChEBI" id="CHEBI:55437"/>
        <dbReference type="ChEBI" id="CHEBI:57856"/>
        <dbReference type="ChEBI" id="CHEBI:59789"/>
        <dbReference type="EC" id="2.1.1.163"/>
    </reaction>
</comment>
<comment type="pathway">
    <text evidence="1">Quinol/quinone metabolism; menaquinone biosynthesis; menaquinol from 1,4-dihydroxy-2-naphthoate: step 2/2.</text>
</comment>
<comment type="similarity">
    <text evidence="1">Belongs to the class I-like SAM-binding methyltransferase superfamily. MenG/UbiE family.</text>
</comment>
<keyword id="KW-0474">Menaquinone biosynthesis</keyword>
<keyword id="KW-0489">Methyltransferase</keyword>
<keyword id="KW-0949">S-adenosyl-L-methionine</keyword>
<keyword id="KW-0808">Transferase</keyword>
<proteinExistence type="inferred from homology"/>
<reference key="1">
    <citation type="journal article" date="2001" name="Lancet">
        <title>Whole genome sequencing of meticillin-resistant Staphylococcus aureus.</title>
        <authorList>
            <person name="Kuroda M."/>
            <person name="Ohta T."/>
            <person name="Uchiyama I."/>
            <person name="Baba T."/>
            <person name="Yuzawa H."/>
            <person name="Kobayashi I."/>
            <person name="Cui L."/>
            <person name="Oguchi A."/>
            <person name="Aoki K."/>
            <person name="Nagai Y."/>
            <person name="Lian J.-Q."/>
            <person name="Ito T."/>
            <person name="Kanamori M."/>
            <person name="Matsumaru H."/>
            <person name="Maruyama A."/>
            <person name="Murakami H."/>
            <person name="Hosoyama A."/>
            <person name="Mizutani-Ui Y."/>
            <person name="Takahashi N.K."/>
            <person name="Sawano T."/>
            <person name="Inoue R."/>
            <person name="Kaito C."/>
            <person name="Sekimizu K."/>
            <person name="Hirakawa H."/>
            <person name="Kuhara S."/>
            <person name="Goto S."/>
            <person name="Yabuzaki J."/>
            <person name="Kanehisa M."/>
            <person name="Yamashita A."/>
            <person name="Oshima K."/>
            <person name="Furuya K."/>
            <person name="Yoshino C."/>
            <person name="Shiba T."/>
            <person name="Hattori M."/>
            <person name="Ogasawara N."/>
            <person name="Hayashi H."/>
            <person name="Hiramatsu K."/>
        </authorList>
    </citation>
    <scope>NUCLEOTIDE SEQUENCE [LARGE SCALE GENOMIC DNA]</scope>
    <source>
        <strain>Mu50 / ATCC 700699</strain>
    </source>
</reference>
<dbReference type="EC" id="2.1.1.163" evidence="1"/>
<dbReference type="EMBL" id="BA000017">
    <property type="protein sequence ID" value="BAB57633.1"/>
    <property type="molecule type" value="Genomic_DNA"/>
</dbReference>
<dbReference type="RefSeq" id="WP_000774684.1">
    <property type="nucleotide sequence ID" value="NC_002758.2"/>
</dbReference>
<dbReference type="SMR" id="P67061"/>
<dbReference type="KEGG" id="sav:SAV1471"/>
<dbReference type="HOGENOM" id="CLU_037990_0_0_9"/>
<dbReference type="PhylomeDB" id="P67061"/>
<dbReference type="UniPathway" id="UPA00079">
    <property type="reaction ID" value="UER00169"/>
</dbReference>
<dbReference type="Proteomes" id="UP000002481">
    <property type="component" value="Chromosome"/>
</dbReference>
<dbReference type="GO" id="GO:0043770">
    <property type="term" value="F:demethylmenaquinone methyltransferase activity"/>
    <property type="evidence" value="ECO:0007669"/>
    <property type="project" value="UniProtKB-UniRule"/>
</dbReference>
<dbReference type="GO" id="GO:0009234">
    <property type="term" value="P:menaquinone biosynthetic process"/>
    <property type="evidence" value="ECO:0007669"/>
    <property type="project" value="UniProtKB-UniRule"/>
</dbReference>
<dbReference type="GO" id="GO:0032259">
    <property type="term" value="P:methylation"/>
    <property type="evidence" value="ECO:0007669"/>
    <property type="project" value="UniProtKB-KW"/>
</dbReference>
<dbReference type="CDD" id="cd02440">
    <property type="entry name" value="AdoMet_MTases"/>
    <property type="match status" value="1"/>
</dbReference>
<dbReference type="FunFam" id="3.40.50.150:FF:000086">
    <property type="entry name" value="Demethylmenaquinone methyltransferase"/>
    <property type="match status" value="1"/>
</dbReference>
<dbReference type="Gene3D" id="3.40.50.150">
    <property type="entry name" value="Vaccinia Virus protein VP39"/>
    <property type="match status" value="1"/>
</dbReference>
<dbReference type="HAMAP" id="MF_01813">
    <property type="entry name" value="MenG_UbiE_methyltr"/>
    <property type="match status" value="1"/>
</dbReference>
<dbReference type="InterPro" id="IPR029063">
    <property type="entry name" value="SAM-dependent_MTases_sf"/>
</dbReference>
<dbReference type="InterPro" id="IPR004033">
    <property type="entry name" value="UbiE/COQ5_MeTrFase"/>
</dbReference>
<dbReference type="InterPro" id="IPR023576">
    <property type="entry name" value="UbiE/COQ5_MeTrFase_CS"/>
</dbReference>
<dbReference type="NCBIfam" id="TIGR01934">
    <property type="entry name" value="MenG_MenH_UbiE"/>
    <property type="match status" value="1"/>
</dbReference>
<dbReference type="NCBIfam" id="NF001243">
    <property type="entry name" value="PRK00216.1-4"/>
    <property type="match status" value="1"/>
</dbReference>
<dbReference type="NCBIfam" id="NF001244">
    <property type="entry name" value="PRK00216.1-5"/>
    <property type="match status" value="1"/>
</dbReference>
<dbReference type="PANTHER" id="PTHR43591:SF24">
    <property type="entry name" value="2-METHOXY-6-POLYPRENYL-1,4-BENZOQUINOL METHYLASE, MITOCHONDRIAL"/>
    <property type="match status" value="1"/>
</dbReference>
<dbReference type="PANTHER" id="PTHR43591">
    <property type="entry name" value="METHYLTRANSFERASE"/>
    <property type="match status" value="1"/>
</dbReference>
<dbReference type="Pfam" id="PF01209">
    <property type="entry name" value="Ubie_methyltran"/>
    <property type="match status" value="1"/>
</dbReference>
<dbReference type="SUPFAM" id="SSF53335">
    <property type="entry name" value="S-adenosyl-L-methionine-dependent methyltransferases"/>
    <property type="match status" value="1"/>
</dbReference>
<dbReference type="PROSITE" id="PS51608">
    <property type="entry name" value="SAM_MT_UBIE"/>
    <property type="match status" value="1"/>
</dbReference>
<dbReference type="PROSITE" id="PS01183">
    <property type="entry name" value="UBIE_1"/>
    <property type="match status" value="1"/>
</dbReference>
<dbReference type="PROSITE" id="PS01184">
    <property type="entry name" value="UBIE_2"/>
    <property type="match status" value="1"/>
</dbReference>
<name>MENG_STAAM</name>
<sequence>MADNKANKEQVHRVFQNISKKYDRLNNIISFEQHKVWRKRVMKDMGVRKGTKALDVCCGTGDWTIALSKAVGPTGEVTGIDFSENMLEVGKEKTASMENVKLVHGDAMELPFEDNSFDYVTIGFGLRNVPDYLVALKEMNRVLKPGGMVVCLETSQPTLPVFKQMYALYFKFVMPIFGKLFAKSKEEYEWLQQSTFNFPGKEELKRMFEEAGFINVRVRSFTGGVAAMHLGYKEKDNTKGD</sequence>
<feature type="chain" id="PRO_0000193328" description="Demethylmenaquinone methyltransferase">
    <location>
        <begin position="1"/>
        <end position="241"/>
    </location>
</feature>
<feature type="binding site" evidence="1">
    <location>
        <position position="60"/>
    </location>
    <ligand>
        <name>S-adenosyl-L-methionine</name>
        <dbReference type="ChEBI" id="CHEBI:59789"/>
    </ligand>
</feature>
<feature type="binding site" evidence="1">
    <location>
        <position position="81"/>
    </location>
    <ligand>
        <name>S-adenosyl-L-methionine</name>
        <dbReference type="ChEBI" id="CHEBI:59789"/>
    </ligand>
</feature>
<feature type="binding site" evidence="1">
    <location>
        <begin position="106"/>
        <end position="107"/>
    </location>
    <ligand>
        <name>S-adenosyl-L-methionine</name>
        <dbReference type="ChEBI" id="CHEBI:59789"/>
    </ligand>
</feature>
<evidence type="ECO:0000255" key="1">
    <source>
        <dbReference type="HAMAP-Rule" id="MF_01813"/>
    </source>
</evidence>
<accession>P67061</accession>
<accession>Q99U19</accession>
<protein>
    <recommendedName>
        <fullName evidence="1">Demethylmenaquinone methyltransferase</fullName>
        <ecNumber evidence="1">2.1.1.163</ecNumber>
    </recommendedName>
</protein>
<gene>
    <name evidence="1" type="primary">menG</name>
    <name type="ordered locus">SAV1471</name>
</gene>
<organism>
    <name type="scientific">Staphylococcus aureus (strain Mu50 / ATCC 700699)</name>
    <dbReference type="NCBI Taxonomy" id="158878"/>
    <lineage>
        <taxon>Bacteria</taxon>
        <taxon>Bacillati</taxon>
        <taxon>Bacillota</taxon>
        <taxon>Bacilli</taxon>
        <taxon>Bacillales</taxon>
        <taxon>Staphylococcaceae</taxon>
        <taxon>Staphylococcus</taxon>
    </lineage>
</organism>